<dbReference type="EMBL" id="CP000393">
    <property type="protein sequence ID" value="ABG50988.1"/>
    <property type="molecule type" value="Genomic_DNA"/>
</dbReference>
<dbReference type="RefSeq" id="WP_011611363.1">
    <property type="nucleotide sequence ID" value="NC_008312.1"/>
</dbReference>
<dbReference type="SMR" id="Q114T6"/>
<dbReference type="STRING" id="203124.Tery_1725"/>
<dbReference type="KEGG" id="ter:Tery_1725"/>
<dbReference type="eggNOG" id="COG1195">
    <property type="taxonomic scope" value="Bacteria"/>
</dbReference>
<dbReference type="HOGENOM" id="CLU_040267_0_1_3"/>
<dbReference type="OrthoDB" id="9803889at2"/>
<dbReference type="GO" id="GO:0005737">
    <property type="term" value="C:cytoplasm"/>
    <property type="evidence" value="ECO:0007669"/>
    <property type="project" value="UniProtKB-SubCell"/>
</dbReference>
<dbReference type="GO" id="GO:0005524">
    <property type="term" value="F:ATP binding"/>
    <property type="evidence" value="ECO:0007669"/>
    <property type="project" value="UniProtKB-UniRule"/>
</dbReference>
<dbReference type="GO" id="GO:0003697">
    <property type="term" value="F:single-stranded DNA binding"/>
    <property type="evidence" value="ECO:0007669"/>
    <property type="project" value="UniProtKB-UniRule"/>
</dbReference>
<dbReference type="GO" id="GO:0006260">
    <property type="term" value="P:DNA replication"/>
    <property type="evidence" value="ECO:0007669"/>
    <property type="project" value="UniProtKB-UniRule"/>
</dbReference>
<dbReference type="GO" id="GO:0000731">
    <property type="term" value="P:DNA synthesis involved in DNA repair"/>
    <property type="evidence" value="ECO:0007669"/>
    <property type="project" value="TreeGrafter"/>
</dbReference>
<dbReference type="GO" id="GO:0006302">
    <property type="term" value="P:double-strand break repair"/>
    <property type="evidence" value="ECO:0007669"/>
    <property type="project" value="TreeGrafter"/>
</dbReference>
<dbReference type="GO" id="GO:0009432">
    <property type="term" value="P:SOS response"/>
    <property type="evidence" value="ECO:0007669"/>
    <property type="project" value="UniProtKB-UniRule"/>
</dbReference>
<dbReference type="CDD" id="cd03242">
    <property type="entry name" value="ABC_RecF"/>
    <property type="match status" value="1"/>
</dbReference>
<dbReference type="Gene3D" id="3.40.50.300">
    <property type="entry name" value="P-loop containing nucleotide triphosphate hydrolases"/>
    <property type="match status" value="1"/>
</dbReference>
<dbReference type="Gene3D" id="1.20.1050.90">
    <property type="entry name" value="RecF/RecN/SMC, N-terminal domain"/>
    <property type="match status" value="1"/>
</dbReference>
<dbReference type="HAMAP" id="MF_00365">
    <property type="entry name" value="RecF"/>
    <property type="match status" value="1"/>
</dbReference>
<dbReference type="InterPro" id="IPR001238">
    <property type="entry name" value="DNA-binding_RecF"/>
</dbReference>
<dbReference type="InterPro" id="IPR018078">
    <property type="entry name" value="DNA-binding_RecF_CS"/>
</dbReference>
<dbReference type="InterPro" id="IPR027417">
    <property type="entry name" value="P-loop_NTPase"/>
</dbReference>
<dbReference type="InterPro" id="IPR003395">
    <property type="entry name" value="RecF/RecN/SMC_N"/>
</dbReference>
<dbReference type="InterPro" id="IPR042174">
    <property type="entry name" value="RecF_2"/>
</dbReference>
<dbReference type="NCBIfam" id="TIGR00611">
    <property type="entry name" value="recf"/>
    <property type="match status" value="1"/>
</dbReference>
<dbReference type="PANTHER" id="PTHR32182">
    <property type="entry name" value="DNA REPLICATION AND REPAIR PROTEIN RECF"/>
    <property type="match status" value="1"/>
</dbReference>
<dbReference type="PANTHER" id="PTHR32182:SF0">
    <property type="entry name" value="DNA REPLICATION AND REPAIR PROTEIN RECF"/>
    <property type="match status" value="1"/>
</dbReference>
<dbReference type="Pfam" id="PF02463">
    <property type="entry name" value="SMC_N"/>
    <property type="match status" value="1"/>
</dbReference>
<dbReference type="SUPFAM" id="SSF52540">
    <property type="entry name" value="P-loop containing nucleoside triphosphate hydrolases"/>
    <property type="match status" value="1"/>
</dbReference>
<dbReference type="PROSITE" id="PS00617">
    <property type="entry name" value="RECF_1"/>
    <property type="match status" value="1"/>
</dbReference>
<dbReference type="PROSITE" id="PS00618">
    <property type="entry name" value="RECF_2"/>
    <property type="match status" value="1"/>
</dbReference>
<sequence length="390" mass="44299">MYLKHLHLRQFRNYRDQQVKFDGAKTILLGDNAQGKSNLLESVELLSTLKSHRAIRDRDLILDSKQASKIQASLERQLGNIDLALTLRSQGKRTVAVNGETISRHLDFLSILNVVHFSSLDLDLVRGGPEVRRYWLDRLLVQLEPVYAHILLQYNQVLRQRNALLKKIRQQKMAAETTGSSPSILTQELALWDAQLATTGSRVIRRRQRLLQKLAPLAGEWHCAISGSMEVFKMEYLANVIVDSNELIIQDSLEGVRQAFLEKIKVRAIAEQYQGTTVVGPHRDDVIFTINDTPARQYGSQGQQRTLVLALKLAELQLIEEVVQEPPLLLLDDVLAELDLHRQNQLLEAISNRFQTLITTTHLGCFDGQWLQDTQILSVKSGNISSFLDF</sequence>
<feature type="chain" id="PRO_1000048595" description="DNA replication and repair protein RecF">
    <location>
        <begin position="1"/>
        <end position="390"/>
    </location>
</feature>
<feature type="binding site" evidence="1">
    <location>
        <begin position="30"/>
        <end position="37"/>
    </location>
    <ligand>
        <name>ATP</name>
        <dbReference type="ChEBI" id="CHEBI:30616"/>
    </ligand>
</feature>
<reference key="1">
    <citation type="journal article" date="2015" name="Proc. Natl. Acad. Sci. U.S.A.">
        <title>Trichodesmium genome maintains abundant, widespread noncoding DNA in situ, despite oligotrophic lifestyle.</title>
        <authorList>
            <person name="Walworth N."/>
            <person name="Pfreundt U."/>
            <person name="Nelson W.C."/>
            <person name="Mincer T."/>
            <person name="Heidelberg J.F."/>
            <person name="Fu F."/>
            <person name="Waterbury J.B."/>
            <person name="Glavina del Rio T."/>
            <person name="Goodwin L."/>
            <person name="Kyrpides N.C."/>
            <person name="Land M.L."/>
            <person name="Woyke T."/>
            <person name="Hutchins D.A."/>
            <person name="Hess W.R."/>
            <person name="Webb E.A."/>
        </authorList>
    </citation>
    <scope>NUCLEOTIDE SEQUENCE [LARGE SCALE GENOMIC DNA]</scope>
    <source>
        <strain>IMS101</strain>
    </source>
</reference>
<accession>Q114T6</accession>
<evidence type="ECO:0000255" key="1">
    <source>
        <dbReference type="HAMAP-Rule" id="MF_00365"/>
    </source>
</evidence>
<comment type="function">
    <text evidence="1">The RecF protein is involved in DNA metabolism; it is required for DNA replication and normal SOS inducibility. RecF binds preferentially to single-stranded, linear DNA. It also seems to bind ATP.</text>
</comment>
<comment type="subcellular location">
    <subcellularLocation>
        <location evidence="1">Cytoplasm</location>
    </subcellularLocation>
</comment>
<comment type="similarity">
    <text evidence="1">Belongs to the RecF family.</text>
</comment>
<organism>
    <name type="scientific">Trichodesmium erythraeum (strain IMS101)</name>
    <dbReference type="NCBI Taxonomy" id="203124"/>
    <lineage>
        <taxon>Bacteria</taxon>
        <taxon>Bacillati</taxon>
        <taxon>Cyanobacteriota</taxon>
        <taxon>Cyanophyceae</taxon>
        <taxon>Oscillatoriophycideae</taxon>
        <taxon>Oscillatoriales</taxon>
        <taxon>Microcoleaceae</taxon>
        <taxon>Trichodesmium</taxon>
    </lineage>
</organism>
<gene>
    <name evidence="1" type="primary">recF</name>
    <name type="ordered locus">Tery_1725</name>
</gene>
<keyword id="KW-0067">ATP-binding</keyword>
<keyword id="KW-0963">Cytoplasm</keyword>
<keyword id="KW-0227">DNA damage</keyword>
<keyword id="KW-0234">DNA repair</keyword>
<keyword id="KW-0235">DNA replication</keyword>
<keyword id="KW-0238">DNA-binding</keyword>
<keyword id="KW-0547">Nucleotide-binding</keyword>
<keyword id="KW-0742">SOS response</keyword>
<name>RECF_TRIEI</name>
<protein>
    <recommendedName>
        <fullName evidence="1">DNA replication and repair protein RecF</fullName>
    </recommendedName>
</protein>
<proteinExistence type="inferred from homology"/>